<feature type="chain" id="PRO_1000073289" description="Large ribosomal subunit protein uL5">
    <location>
        <begin position="1"/>
        <end position="185"/>
    </location>
</feature>
<accession>A7HWS3</accession>
<keyword id="KW-1185">Reference proteome</keyword>
<keyword id="KW-0687">Ribonucleoprotein</keyword>
<keyword id="KW-0689">Ribosomal protein</keyword>
<keyword id="KW-0694">RNA-binding</keyword>
<keyword id="KW-0699">rRNA-binding</keyword>
<keyword id="KW-0820">tRNA-binding</keyword>
<sequence length="185" mass="21254">MAEAQYIPRLKVQYLEKFRPELTEKFSYKNLLEVPRLDKIVLNMGVGEAVGDSKKIKSAFEDLQAIAGQKPVITKAKTSIATFKLREGMPIGVKVTLRKDRMYEFLDRLVTVALPRVRDFRGLNAKSFDGRGNYAMGLKEHIVFPEIDYDKVDQIWGMDIIVCTTAKTDDEARELLRKFNFPFTK</sequence>
<evidence type="ECO:0000255" key="1">
    <source>
        <dbReference type="HAMAP-Rule" id="MF_01333"/>
    </source>
</evidence>
<evidence type="ECO:0000305" key="2"/>
<reference key="1">
    <citation type="journal article" date="2011" name="Stand. Genomic Sci.">
        <title>Complete genome sequence of Parvibaculum lavamentivorans type strain (DS-1(T)).</title>
        <authorList>
            <person name="Schleheck D."/>
            <person name="Weiss M."/>
            <person name="Pitluck S."/>
            <person name="Bruce D."/>
            <person name="Land M.L."/>
            <person name="Han S."/>
            <person name="Saunders E."/>
            <person name="Tapia R."/>
            <person name="Detter C."/>
            <person name="Brettin T."/>
            <person name="Han J."/>
            <person name="Woyke T."/>
            <person name="Goodwin L."/>
            <person name="Pennacchio L."/>
            <person name="Nolan M."/>
            <person name="Cook A.M."/>
            <person name="Kjelleberg S."/>
            <person name="Thomas T."/>
        </authorList>
    </citation>
    <scope>NUCLEOTIDE SEQUENCE [LARGE SCALE GENOMIC DNA]</scope>
    <source>
        <strain>DS-1 / DSM 13023 / NCIMB 13966</strain>
    </source>
</reference>
<comment type="function">
    <text evidence="1">This is one of the proteins that bind and probably mediate the attachment of the 5S RNA into the large ribosomal subunit, where it forms part of the central protuberance. In the 70S ribosome it contacts protein S13 of the 30S subunit (bridge B1b), connecting the 2 subunits; this bridge is implicated in subunit movement. Contacts the P site tRNA; the 5S rRNA and some of its associated proteins might help stabilize positioning of ribosome-bound tRNAs.</text>
</comment>
<comment type="subunit">
    <text evidence="1">Part of the 50S ribosomal subunit; part of the 5S rRNA/L5/L18/L25 subcomplex. Contacts the 5S rRNA and the P site tRNA. Forms a bridge to the 30S subunit in the 70S ribosome.</text>
</comment>
<comment type="similarity">
    <text evidence="1">Belongs to the universal ribosomal protein uL5 family.</text>
</comment>
<dbReference type="EMBL" id="CP000774">
    <property type="protein sequence ID" value="ABS64356.1"/>
    <property type="molecule type" value="Genomic_DNA"/>
</dbReference>
<dbReference type="RefSeq" id="WP_012111670.1">
    <property type="nucleotide sequence ID" value="NC_009719.1"/>
</dbReference>
<dbReference type="SMR" id="A7HWS3"/>
<dbReference type="STRING" id="402881.Plav_2748"/>
<dbReference type="KEGG" id="pla:Plav_2748"/>
<dbReference type="eggNOG" id="COG0094">
    <property type="taxonomic scope" value="Bacteria"/>
</dbReference>
<dbReference type="HOGENOM" id="CLU_061015_2_1_5"/>
<dbReference type="OrthoDB" id="9806626at2"/>
<dbReference type="Proteomes" id="UP000006377">
    <property type="component" value="Chromosome"/>
</dbReference>
<dbReference type="GO" id="GO:1990904">
    <property type="term" value="C:ribonucleoprotein complex"/>
    <property type="evidence" value="ECO:0007669"/>
    <property type="project" value="UniProtKB-KW"/>
</dbReference>
<dbReference type="GO" id="GO:0005840">
    <property type="term" value="C:ribosome"/>
    <property type="evidence" value="ECO:0007669"/>
    <property type="project" value="UniProtKB-KW"/>
</dbReference>
<dbReference type="GO" id="GO:0019843">
    <property type="term" value="F:rRNA binding"/>
    <property type="evidence" value="ECO:0007669"/>
    <property type="project" value="UniProtKB-UniRule"/>
</dbReference>
<dbReference type="GO" id="GO:0003735">
    <property type="term" value="F:structural constituent of ribosome"/>
    <property type="evidence" value="ECO:0007669"/>
    <property type="project" value="InterPro"/>
</dbReference>
<dbReference type="GO" id="GO:0000049">
    <property type="term" value="F:tRNA binding"/>
    <property type="evidence" value="ECO:0007669"/>
    <property type="project" value="UniProtKB-UniRule"/>
</dbReference>
<dbReference type="GO" id="GO:0006412">
    <property type="term" value="P:translation"/>
    <property type="evidence" value="ECO:0007669"/>
    <property type="project" value="UniProtKB-UniRule"/>
</dbReference>
<dbReference type="FunFam" id="3.30.1440.10:FF:000001">
    <property type="entry name" value="50S ribosomal protein L5"/>
    <property type="match status" value="1"/>
</dbReference>
<dbReference type="Gene3D" id="3.30.1440.10">
    <property type="match status" value="1"/>
</dbReference>
<dbReference type="HAMAP" id="MF_01333_B">
    <property type="entry name" value="Ribosomal_uL5_B"/>
    <property type="match status" value="1"/>
</dbReference>
<dbReference type="InterPro" id="IPR002132">
    <property type="entry name" value="Ribosomal_uL5"/>
</dbReference>
<dbReference type="InterPro" id="IPR020930">
    <property type="entry name" value="Ribosomal_uL5_bac-type"/>
</dbReference>
<dbReference type="InterPro" id="IPR031309">
    <property type="entry name" value="Ribosomal_uL5_C"/>
</dbReference>
<dbReference type="InterPro" id="IPR020929">
    <property type="entry name" value="Ribosomal_uL5_CS"/>
</dbReference>
<dbReference type="InterPro" id="IPR022803">
    <property type="entry name" value="Ribosomal_uL5_dom_sf"/>
</dbReference>
<dbReference type="InterPro" id="IPR031310">
    <property type="entry name" value="Ribosomal_uL5_N"/>
</dbReference>
<dbReference type="NCBIfam" id="NF000585">
    <property type="entry name" value="PRK00010.1"/>
    <property type="match status" value="1"/>
</dbReference>
<dbReference type="PANTHER" id="PTHR11994">
    <property type="entry name" value="60S RIBOSOMAL PROTEIN L11-RELATED"/>
    <property type="match status" value="1"/>
</dbReference>
<dbReference type="Pfam" id="PF00281">
    <property type="entry name" value="Ribosomal_L5"/>
    <property type="match status" value="1"/>
</dbReference>
<dbReference type="Pfam" id="PF00673">
    <property type="entry name" value="Ribosomal_L5_C"/>
    <property type="match status" value="1"/>
</dbReference>
<dbReference type="PIRSF" id="PIRSF002161">
    <property type="entry name" value="Ribosomal_L5"/>
    <property type="match status" value="1"/>
</dbReference>
<dbReference type="SUPFAM" id="SSF55282">
    <property type="entry name" value="RL5-like"/>
    <property type="match status" value="1"/>
</dbReference>
<dbReference type="PROSITE" id="PS00358">
    <property type="entry name" value="RIBOSOMAL_L5"/>
    <property type="match status" value="1"/>
</dbReference>
<proteinExistence type="inferred from homology"/>
<organism>
    <name type="scientific">Parvibaculum lavamentivorans (strain DS-1 / DSM 13023 / NCIMB 13966)</name>
    <dbReference type="NCBI Taxonomy" id="402881"/>
    <lineage>
        <taxon>Bacteria</taxon>
        <taxon>Pseudomonadati</taxon>
        <taxon>Pseudomonadota</taxon>
        <taxon>Alphaproteobacteria</taxon>
        <taxon>Hyphomicrobiales</taxon>
        <taxon>Parvibaculaceae</taxon>
        <taxon>Parvibaculum</taxon>
    </lineage>
</organism>
<gene>
    <name evidence="1" type="primary">rplE</name>
    <name type="ordered locus">Plav_2748</name>
</gene>
<protein>
    <recommendedName>
        <fullName evidence="1">Large ribosomal subunit protein uL5</fullName>
    </recommendedName>
    <alternativeName>
        <fullName evidence="2">50S ribosomal protein L5</fullName>
    </alternativeName>
</protein>
<name>RL5_PARL1</name>